<evidence type="ECO:0000250" key="1">
    <source>
        <dbReference type="UniProtKB" id="O14763"/>
    </source>
</evidence>
<evidence type="ECO:0000255" key="2"/>
<evidence type="ECO:0000255" key="3">
    <source>
        <dbReference type="PROSITE-ProRule" id="PRU00064"/>
    </source>
</evidence>
<evidence type="ECO:0000255" key="4">
    <source>
        <dbReference type="PROSITE-ProRule" id="PRU00206"/>
    </source>
</evidence>
<evidence type="ECO:0000256" key="5">
    <source>
        <dbReference type="SAM" id="MobiDB-lite"/>
    </source>
</evidence>
<evidence type="ECO:0000269" key="6">
    <source>
    </source>
</evidence>
<evidence type="ECO:0000305" key="7"/>
<keyword id="KW-0053">Apoptosis</keyword>
<keyword id="KW-1015">Disulfide bond</keyword>
<keyword id="KW-0325">Glycoprotein</keyword>
<keyword id="KW-0472">Membrane</keyword>
<keyword id="KW-0675">Receptor</keyword>
<keyword id="KW-1185">Reference proteome</keyword>
<keyword id="KW-0677">Repeat</keyword>
<keyword id="KW-0732">Signal</keyword>
<keyword id="KW-0812">Transmembrane</keyword>
<keyword id="KW-1133">Transmembrane helix</keyword>
<proteinExistence type="evidence at protein level"/>
<dbReference type="EMBL" id="AF176833">
    <property type="protein sequence ID" value="AAD52656.1"/>
    <property type="molecule type" value="mRNA"/>
</dbReference>
<dbReference type="EMBL" id="AB031081">
    <property type="protein sequence ID" value="BAA96462.1"/>
    <property type="molecule type" value="mRNA"/>
</dbReference>
<dbReference type="EMBL" id="AB031082">
    <property type="protein sequence ID" value="BAA96463.1"/>
    <property type="molecule type" value="Genomic_DNA"/>
</dbReference>
<dbReference type="EMBL" id="AK050753">
    <property type="protein sequence ID" value="BAC34404.1"/>
    <property type="molecule type" value="mRNA"/>
</dbReference>
<dbReference type="EMBL" id="AK080069">
    <property type="protein sequence ID" value="BAC37821.1"/>
    <property type="molecule type" value="mRNA"/>
</dbReference>
<dbReference type="EMBL" id="AK154993">
    <property type="protein sequence ID" value="BAE32980.1"/>
    <property type="molecule type" value="mRNA"/>
</dbReference>
<dbReference type="EMBL" id="BC065141">
    <property type="protein sequence ID" value="AAH65141.1"/>
    <property type="molecule type" value="mRNA"/>
</dbReference>
<dbReference type="CCDS" id="CCDS27243.1"/>
<dbReference type="RefSeq" id="NP_064671.2">
    <property type="nucleotide sequence ID" value="NM_020275.4"/>
</dbReference>
<dbReference type="SMR" id="Q9QZM4"/>
<dbReference type="FunCoup" id="Q9QZM4">
    <property type="interactions" value="839"/>
</dbReference>
<dbReference type="IntAct" id="Q9QZM4">
    <property type="interactions" value="1"/>
</dbReference>
<dbReference type="STRING" id="10090.ENSMUSP00000022663"/>
<dbReference type="GlyCosmos" id="Q9QZM4">
    <property type="glycosylation" value="1 site, No reported glycans"/>
</dbReference>
<dbReference type="iPTMnet" id="Q9QZM4"/>
<dbReference type="PhosphoSitePlus" id="Q9QZM4"/>
<dbReference type="PaxDb" id="10090-ENSMUSP00000022663"/>
<dbReference type="PeptideAtlas" id="Q9QZM4"/>
<dbReference type="ProteomicsDB" id="259297"/>
<dbReference type="Pumba" id="Q9QZM4"/>
<dbReference type="DNASU" id="21933"/>
<dbReference type="Ensembl" id="ENSMUST00000022663.7">
    <property type="protein sequence ID" value="ENSMUSP00000022663.6"/>
    <property type="gene ID" value="ENSMUSG00000022074.7"/>
</dbReference>
<dbReference type="GeneID" id="21933"/>
<dbReference type="KEGG" id="mmu:21933"/>
<dbReference type="UCSC" id="uc007umu.2">
    <property type="organism name" value="mouse"/>
</dbReference>
<dbReference type="AGR" id="MGI:1341090"/>
<dbReference type="CTD" id="8795"/>
<dbReference type="MGI" id="MGI:1341090">
    <property type="gene designation" value="Tnfrsf10b"/>
</dbReference>
<dbReference type="VEuPathDB" id="HostDB:ENSMUSG00000022074"/>
<dbReference type="eggNOG" id="ENOG502RBEC">
    <property type="taxonomic scope" value="Eukaryota"/>
</dbReference>
<dbReference type="GeneTree" id="ENSGT00940000162427"/>
<dbReference type="HOGENOM" id="CLU_038161_1_0_1"/>
<dbReference type="InParanoid" id="Q9QZM4"/>
<dbReference type="OMA" id="CQNGQDY"/>
<dbReference type="OrthoDB" id="9417953at2759"/>
<dbReference type="PhylomeDB" id="Q9QZM4"/>
<dbReference type="TreeFam" id="TF333916"/>
<dbReference type="Reactome" id="R-MMU-202733">
    <property type="pathway name" value="Cell surface interactions at the vascular wall"/>
</dbReference>
<dbReference type="Reactome" id="R-MMU-3371378">
    <property type="pathway name" value="Regulation by c-FLIP"/>
</dbReference>
<dbReference type="Reactome" id="R-MMU-5218900">
    <property type="pathway name" value="CASP8 activity is inhibited"/>
</dbReference>
<dbReference type="Reactome" id="R-MMU-69416">
    <property type="pathway name" value="Dimerization of procaspase-8"/>
</dbReference>
<dbReference type="Reactome" id="R-MMU-75158">
    <property type="pathway name" value="TRAIL signaling"/>
</dbReference>
<dbReference type="BioGRID-ORCS" id="21933">
    <property type="hits" value="1 hit in 79 CRISPR screens"/>
</dbReference>
<dbReference type="ChiTaRS" id="Tnfrsf10b">
    <property type="organism name" value="mouse"/>
</dbReference>
<dbReference type="PRO" id="PR:Q9QZM4"/>
<dbReference type="Proteomes" id="UP000000589">
    <property type="component" value="Chromosome 14"/>
</dbReference>
<dbReference type="RNAct" id="Q9QZM4">
    <property type="molecule type" value="protein"/>
</dbReference>
<dbReference type="Bgee" id="ENSMUSG00000022074">
    <property type="expression patterns" value="Expressed in kidney vasculature and 77 other cell types or tissues"/>
</dbReference>
<dbReference type="GO" id="GO:0016020">
    <property type="term" value="C:membrane"/>
    <property type="evidence" value="ECO:0007669"/>
    <property type="project" value="UniProtKB-SubCell"/>
</dbReference>
<dbReference type="GO" id="GO:0045569">
    <property type="term" value="F:TRAIL binding"/>
    <property type="evidence" value="ECO:0007669"/>
    <property type="project" value="InterPro"/>
</dbReference>
<dbReference type="GO" id="GO:0070059">
    <property type="term" value="P:intrinsic apoptotic signaling pathway in response to endoplasmic reticulum stress"/>
    <property type="evidence" value="ECO:0000250"/>
    <property type="project" value="UniProtKB"/>
</dbReference>
<dbReference type="GO" id="GO:0051241">
    <property type="term" value="P:negative regulation of multicellular organismal process"/>
    <property type="evidence" value="ECO:0007669"/>
    <property type="project" value="UniProtKB-ARBA"/>
</dbReference>
<dbReference type="GO" id="GO:0034976">
    <property type="term" value="P:response to endoplasmic reticulum stress"/>
    <property type="evidence" value="ECO:0000250"/>
    <property type="project" value="UniProtKB"/>
</dbReference>
<dbReference type="CDD" id="cd08315">
    <property type="entry name" value="Death_TRAILR_DR4_DR5"/>
    <property type="match status" value="1"/>
</dbReference>
<dbReference type="CDD" id="cd10580">
    <property type="entry name" value="TNFRSF10"/>
    <property type="match status" value="1"/>
</dbReference>
<dbReference type="FunFam" id="1.10.533.10:FF:000043">
    <property type="entry name" value="Tumor necrosis factor receptor superfamily member 10A"/>
    <property type="match status" value="1"/>
</dbReference>
<dbReference type="FunFam" id="2.10.50.10:FF:000004">
    <property type="entry name" value="Tumor necrosis factor receptor superfamily member 6"/>
    <property type="match status" value="1"/>
</dbReference>
<dbReference type="Gene3D" id="1.10.533.10">
    <property type="entry name" value="Death Domain, Fas"/>
    <property type="match status" value="1"/>
</dbReference>
<dbReference type="Gene3D" id="2.10.50.10">
    <property type="entry name" value="Tumor Necrosis Factor Receptor, subunit A, domain 2"/>
    <property type="match status" value="2"/>
</dbReference>
<dbReference type="InterPro" id="IPR011029">
    <property type="entry name" value="DEATH-like_dom_sf"/>
</dbReference>
<dbReference type="InterPro" id="IPR000488">
    <property type="entry name" value="Death_dom"/>
</dbReference>
<dbReference type="InterPro" id="IPR001368">
    <property type="entry name" value="TNFR/NGFR_Cys_rich_reg"/>
</dbReference>
<dbReference type="InterPro" id="IPR020465">
    <property type="entry name" value="TNFR_10"/>
</dbReference>
<dbReference type="InterPro" id="IPR052491">
    <property type="entry name" value="TNFRSF10"/>
</dbReference>
<dbReference type="InterPro" id="IPR034024">
    <property type="entry name" value="TNFRSF10_N"/>
</dbReference>
<dbReference type="InterPro" id="IPR034029">
    <property type="entry name" value="TNFRSF10A/B_death"/>
</dbReference>
<dbReference type="PANTHER" id="PTHR46330">
    <property type="entry name" value="TUMOR NECROSIS FACTOR RECEPTOR SUPERFAMILY MEMBER 10B"/>
    <property type="match status" value="1"/>
</dbReference>
<dbReference type="PANTHER" id="PTHR46330:SF1">
    <property type="entry name" value="TUMOR NECROSIS FACTOR RECEPTOR SUPERFAMILY MEMBER 10B"/>
    <property type="match status" value="1"/>
</dbReference>
<dbReference type="Pfam" id="PF00531">
    <property type="entry name" value="Death"/>
    <property type="match status" value="1"/>
</dbReference>
<dbReference type="Pfam" id="PF00020">
    <property type="entry name" value="TNFR_c6"/>
    <property type="match status" value="2"/>
</dbReference>
<dbReference type="PIRSF" id="PIRSF037867">
    <property type="entry name" value="CD261_antigen"/>
    <property type="match status" value="1"/>
</dbReference>
<dbReference type="PRINTS" id="PR01956">
    <property type="entry name" value="TNFACTORR10"/>
</dbReference>
<dbReference type="SMART" id="SM00005">
    <property type="entry name" value="DEATH"/>
    <property type="match status" value="1"/>
</dbReference>
<dbReference type="SMART" id="SM00208">
    <property type="entry name" value="TNFR"/>
    <property type="match status" value="2"/>
</dbReference>
<dbReference type="SUPFAM" id="SSF47986">
    <property type="entry name" value="DEATH domain"/>
    <property type="match status" value="1"/>
</dbReference>
<dbReference type="SUPFAM" id="SSF57586">
    <property type="entry name" value="TNF receptor-like"/>
    <property type="match status" value="2"/>
</dbReference>
<dbReference type="PROSITE" id="PS50017">
    <property type="entry name" value="DEATH_DOMAIN"/>
    <property type="match status" value="1"/>
</dbReference>
<dbReference type="PROSITE" id="PS00652">
    <property type="entry name" value="TNFR_NGFR_1"/>
    <property type="match status" value="2"/>
</dbReference>
<dbReference type="PROSITE" id="PS50050">
    <property type="entry name" value="TNFR_NGFR_2"/>
    <property type="match status" value="2"/>
</dbReference>
<gene>
    <name type="primary">Tnfrsf10b</name>
    <name type="synonym">Dr5</name>
    <name type="synonym">Killer</name>
</gene>
<name>TR10B_MOUSE</name>
<reference key="1">
    <citation type="journal article" date="1999" name="Cancer Res.">
        <title>Molecular cloning and functional analysis of the mouse homologue of the KILLER/DR5 tumor necrosis factor-related apoptosis-inducing ligand (TRAIL) death receptor.</title>
        <authorList>
            <person name="Wu G.S."/>
            <person name="Burns T.F."/>
            <person name="Zhan Y."/>
            <person name="Alnemri E.S."/>
            <person name="El-Deiry W.S."/>
        </authorList>
    </citation>
    <scope>NUCLEOTIDE SEQUENCE [MRNA]</scope>
    <source>
        <tissue>Kidney</tissue>
    </source>
</reference>
<reference key="2">
    <citation type="submission" date="1999-08" db="EMBL/GenBank/DDBJ databases">
        <title>Mouse TRAIL receptor.</title>
        <authorList>
            <person name="Nakamura Y."/>
            <person name="Tamari M."/>
            <person name="Watanabe O."/>
        </authorList>
    </citation>
    <scope>NUCLEOTIDE SEQUENCE [GENOMIC DNA / MRNA]</scope>
    <source>
        <tissue>Spleen</tissue>
    </source>
</reference>
<reference key="3">
    <citation type="journal article" date="2005" name="Science">
        <title>The transcriptional landscape of the mammalian genome.</title>
        <authorList>
            <person name="Carninci P."/>
            <person name="Kasukawa T."/>
            <person name="Katayama S."/>
            <person name="Gough J."/>
            <person name="Frith M.C."/>
            <person name="Maeda N."/>
            <person name="Oyama R."/>
            <person name="Ravasi T."/>
            <person name="Lenhard B."/>
            <person name="Wells C."/>
            <person name="Kodzius R."/>
            <person name="Shimokawa K."/>
            <person name="Bajic V.B."/>
            <person name="Brenner S.E."/>
            <person name="Batalov S."/>
            <person name="Forrest A.R."/>
            <person name="Zavolan M."/>
            <person name="Davis M.J."/>
            <person name="Wilming L.G."/>
            <person name="Aidinis V."/>
            <person name="Allen J.E."/>
            <person name="Ambesi-Impiombato A."/>
            <person name="Apweiler R."/>
            <person name="Aturaliya R.N."/>
            <person name="Bailey T.L."/>
            <person name="Bansal M."/>
            <person name="Baxter L."/>
            <person name="Beisel K.W."/>
            <person name="Bersano T."/>
            <person name="Bono H."/>
            <person name="Chalk A.M."/>
            <person name="Chiu K.P."/>
            <person name="Choudhary V."/>
            <person name="Christoffels A."/>
            <person name="Clutterbuck D.R."/>
            <person name="Crowe M.L."/>
            <person name="Dalla E."/>
            <person name="Dalrymple B.P."/>
            <person name="de Bono B."/>
            <person name="Della Gatta G."/>
            <person name="di Bernardo D."/>
            <person name="Down T."/>
            <person name="Engstrom P."/>
            <person name="Fagiolini M."/>
            <person name="Faulkner G."/>
            <person name="Fletcher C.F."/>
            <person name="Fukushima T."/>
            <person name="Furuno M."/>
            <person name="Futaki S."/>
            <person name="Gariboldi M."/>
            <person name="Georgii-Hemming P."/>
            <person name="Gingeras T.R."/>
            <person name="Gojobori T."/>
            <person name="Green R.E."/>
            <person name="Gustincich S."/>
            <person name="Harbers M."/>
            <person name="Hayashi Y."/>
            <person name="Hensch T.K."/>
            <person name="Hirokawa N."/>
            <person name="Hill D."/>
            <person name="Huminiecki L."/>
            <person name="Iacono M."/>
            <person name="Ikeo K."/>
            <person name="Iwama A."/>
            <person name="Ishikawa T."/>
            <person name="Jakt M."/>
            <person name="Kanapin A."/>
            <person name="Katoh M."/>
            <person name="Kawasawa Y."/>
            <person name="Kelso J."/>
            <person name="Kitamura H."/>
            <person name="Kitano H."/>
            <person name="Kollias G."/>
            <person name="Krishnan S.P."/>
            <person name="Kruger A."/>
            <person name="Kummerfeld S.K."/>
            <person name="Kurochkin I.V."/>
            <person name="Lareau L.F."/>
            <person name="Lazarevic D."/>
            <person name="Lipovich L."/>
            <person name="Liu J."/>
            <person name="Liuni S."/>
            <person name="McWilliam S."/>
            <person name="Madan Babu M."/>
            <person name="Madera M."/>
            <person name="Marchionni L."/>
            <person name="Matsuda H."/>
            <person name="Matsuzawa S."/>
            <person name="Miki H."/>
            <person name="Mignone F."/>
            <person name="Miyake S."/>
            <person name="Morris K."/>
            <person name="Mottagui-Tabar S."/>
            <person name="Mulder N."/>
            <person name="Nakano N."/>
            <person name="Nakauchi H."/>
            <person name="Ng P."/>
            <person name="Nilsson R."/>
            <person name="Nishiguchi S."/>
            <person name="Nishikawa S."/>
            <person name="Nori F."/>
            <person name="Ohara O."/>
            <person name="Okazaki Y."/>
            <person name="Orlando V."/>
            <person name="Pang K.C."/>
            <person name="Pavan W.J."/>
            <person name="Pavesi G."/>
            <person name="Pesole G."/>
            <person name="Petrovsky N."/>
            <person name="Piazza S."/>
            <person name="Reed J."/>
            <person name="Reid J.F."/>
            <person name="Ring B.Z."/>
            <person name="Ringwald M."/>
            <person name="Rost B."/>
            <person name="Ruan Y."/>
            <person name="Salzberg S.L."/>
            <person name="Sandelin A."/>
            <person name="Schneider C."/>
            <person name="Schoenbach C."/>
            <person name="Sekiguchi K."/>
            <person name="Semple C.A."/>
            <person name="Seno S."/>
            <person name="Sessa L."/>
            <person name="Sheng Y."/>
            <person name="Shibata Y."/>
            <person name="Shimada H."/>
            <person name="Shimada K."/>
            <person name="Silva D."/>
            <person name="Sinclair B."/>
            <person name="Sperling S."/>
            <person name="Stupka E."/>
            <person name="Sugiura K."/>
            <person name="Sultana R."/>
            <person name="Takenaka Y."/>
            <person name="Taki K."/>
            <person name="Tammoja K."/>
            <person name="Tan S.L."/>
            <person name="Tang S."/>
            <person name="Taylor M.S."/>
            <person name="Tegner J."/>
            <person name="Teichmann S.A."/>
            <person name="Ueda H.R."/>
            <person name="van Nimwegen E."/>
            <person name="Verardo R."/>
            <person name="Wei C.L."/>
            <person name="Yagi K."/>
            <person name="Yamanishi H."/>
            <person name="Zabarovsky E."/>
            <person name="Zhu S."/>
            <person name="Zimmer A."/>
            <person name="Hide W."/>
            <person name="Bult C."/>
            <person name="Grimmond S.M."/>
            <person name="Teasdale R.D."/>
            <person name="Liu E.T."/>
            <person name="Brusic V."/>
            <person name="Quackenbush J."/>
            <person name="Wahlestedt C."/>
            <person name="Mattick J.S."/>
            <person name="Hume D.A."/>
            <person name="Kai C."/>
            <person name="Sasaki D."/>
            <person name="Tomaru Y."/>
            <person name="Fukuda S."/>
            <person name="Kanamori-Katayama M."/>
            <person name="Suzuki M."/>
            <person name="Aoki J."/>
            <person name="Arakawa T."/>
            <person name="Iida J."/>
            <person name="Imamura K."/>
            <person name="Itoh M."/>
            <person name="Kato T."/>
            <person name="Kawaji H."/>
            <person name="Kawagashira N."/>
            <person name="Kawashima T."/>
            <person name="Kojima M."/>
            <person name="Kondo S."/>
            <person name="Konno H."/>
            <person name="Nakano K."/>
            <person name="Ninomiya N."/>
            <person name="Nishio T."/>
            <person name="Okada M."/>
            <person name="Plessy C."/>
            <person name="Shibata K."/>
            <person name="Shiraki T."/>
            <person name="Suzuki S."/>
            <person name="Tagami M."/>
            <person name="Waki K."/>
            <person name="Watahiki A."/>
            <person name="Okamura-Oho Y."/>
            <person name="Suzuki H."/>
            <person name="Kawai J."/>
            <person name="Hayashizaki Y."/>
        </authorList>
    </citation>
    <scope>NUCLEOTIDE SEQUENCE [LARGE SCALE MRNA]</scope>
    <source>
        <strain>C57BL/6J</strain>
        <strain>NOD</strain>
        <tissue>Aorta</tissue>
        <tissue>Embryo</tissue>
        <tissue>Vein</tissue>
    </source>
</reference>
<reference key="4">
    <citation type="journal article" date="2004" name="Genome Res.">
        <title>The status, quality, and expansion of the NIH full-length cDNA project: the Mammalian Gene Collection (MGC).</title>
        <authorList>
            <consortium name="The MGC Project Team"/>
        </authorList>
    </citation>
    <scope>NUCLEOTIDE SEQUENCE [LARGE SCALE MRNA]</scope>
    <source>
        <strain>C57BL/6J</strain>
        <tissue>Eye</tissue>
    </source>
</reference>
<reference key="5">
    <citation type="journal article" date="2019" name="Mol. Cell. Proteomics">
        <title>Salmonella effectors SseK1 and SseK3 target death domain proteins in the TNF and TRAIL signaling pathways.</title>
        <authorList>
            <person name="Newson J.P.M."/>
            <person name="Scott N.E."/>
            <person name="Yeuk Wah Chung I."/>
            <person name="Wong Fok Lung T."/>
            <person name="Giogha C."/>
            <person name="Gan J."/>
            <person name="Wang N."/>
            <person name="Strugnell R.A."/>
            <person name="Brown N.F."/>
            <person name="Cygler M."/>
            <person name="Pearson J.S."/>
            <person name="Hartland E.L."/>
        </authorList>
    </citation>
    <scope>GLYCOSYLATION AT ARG-293 (MICROBIAL INFECTION)</scope>
</reference>
<sequence length="381" mass="42165">MEPPGPSTPTASAAARADHYTPGLRPLPKRRLLYSFALLLAVLQAVFVPVTANPAHNRPAGLQRPEESPSRGPCLAGQYLSEGNCKPCREGIDYTSHSNHSLDSCILCTVCKEDKVVETRCNITTNTVCRCKPGTFEDKDSPEICQSCSNCTDGEEELTSCTPRENRKCVSKTAWASWHKLGLWIGLLVPVVLLIGALLVWKTGAWRQWLLCIKRGCERDPESANSVHSSLLDRQTSSTTNDSNHNTEPGKTQKTGKKLLVPVNGNDSADDLKFIFEYCSDIVPFDSWNRLMRQLGLTDNQIQMVKAETLVTREALYQMLLKWRHQTGRSASINHLLDALEAVEERDAMEKIEDYAVKSGRFTYQNAAAQPETGPGGSQCV</sequence>
<feature type="signal peptide" evidence="2">
    <location>
        <begin position="1"/>
        <end position="52"/>
    </location>
</feature>
<feature type="chain" id="PRO_0000034581" description="Tumor necrosis factor receptor superfamily member 10B">
    <location>
        <begin position="53"/>
        <end position="381"/>
    </location>
</feature>
<feature type="topological domain" description="Extracellular" evidence="2">
    <location>
        <begin position="53"/>
        <end position="180"/>
    </location>
</feature>
<feature type="transmembrane region" description="Helical" evidence="2">
    <location>
        <begin position="181"/>
        <end position="201"/>
    </location>
</feature>
<feature type="topological domain" description="Cytoplasmic" evidence="2">
    <location>
        <begin position="202"/>
        <end position="381"/>
    </location>
</feature>
<feature type="repeat" description="TNFR-Cys 1">
    <location>
        <begin position="26"/>
        <end position="86"/>
    </location>
</feature>
<feature type="repeat" description="TNFR-Cys 2">
    <location>
        <begin position="87"/>
        <end position="129"/>
    </location>
</feature>
<feature type="repeat" description="TNFR-Cys 3">
    <location>
        <begin position="130"/>
        <end position="169"/>
    </location>
</feature>
<feature type="domain" description="Death" evidence="3">
    <location>
        <begin position="273"/>
        <end position="356"/>
    </location>
</feature>
<feature type="region of interest" description="Disordered" evidence="5">
    <location>
        <begin position="228"/>
        <end position="260"/>
    </location>
</feature>
<feature type="compositionally biased region" description="Low complexity" evidence="5">
    <location>
        <begin position="236"/>
        <end position="247"/>
    </location>
</feature>
<feature type="glycosylation site" description="(Microbial infection) N-beta-linked (GlcNAc) arginine" evidence="6">
    <location>
        <position position="293"/>
    </location>
</feature>
<feature type="disulfide bond" evidence="1 4">
    <location>
        <begin position="74"/>
        <end position="85"/>
    </location>
</feature>
<feature type="disulfide bond" evidence="1 4">
    <location>
        <begin position="88"/>
        <end position="105"/>
    </location>
</feature>
<feature type="disulfide bond" evidence="1 4">
    <location>
        <begin position="108"/>
        <end position="121"/>
    </location>
</feature>
<feature type="disulfide bond" evidence="1 4">
    <location>
        <begin position="111"/>
        <end position="129"/>
    </location>
</feature>
<feature type="disulfide bond" evidence="1 4">
    <location>
        <begin position="131"/>
        <end position="145"/>
    </location>
</feature>
<feature type="disulfide bond" evidence="1 4">
    <location>
        <begin position="148"/>
        <end position="161"/>
    </location>
</feature>
<feature type="disulfide bond" evidence="1 4">
    <location>
        <begin position="151"/>
        <end position="169"/>
    </location>
</feature>
<feature type="sequence conflict" description="In Ref. 2; BAA96462/BAA96463." evidence="7" ref="2">
    <original>V</original>
    <variation>M</variation>
    <location>
        <position position="42"/>
    </location>
</feature>
<feature type="sequence conflict" description="In Ref. 2; BAA96463." evidence="7" ref="2">
    <original>H</original>
    <variation>R</variation>
    <location>
        <position position="97"/>
    </location>
</feature>
<feature type="sequence conflict" description="In Ref. 2; BAA96463." evidence="7" ref="2">
    <original>V</original>
    <variation>E</variation>
    <location>
        <position position="128"/>
    </location>
</feature>
<feature type="sequence conflict" description="In Ref. 2; BAA96463." evidence="7" ref="2">
    <original>K</original>
    <variation>N</variation>
    <location>
        <position position="180"/>
    </location>
</feature>
<feature type="sequence conflict" description="In Ref. 2; BAA96463." evidence="7" ref="2">
    <original>L</original>
    <variation>AT</variation>
    <location>
        <position position="187"/>
    </location>
</feature>
<feature type="sequence conflict" description="In Ref. 2; BAA96463." evidence="7" ref="2">
    <original>R</original>
    <variation>RAYP</variation>
    <location>
        <position position="215"/>
    </location>
</feature>
<feature type="sequence conflict" description="In Ref. 2; BAA96462/BAA96463." evidence="7" ref="2">
    <original>S</original>
    <variation>L</variation>
    <location>
        <position position="229"/>
    </location>
</feature>
<feature type="sequence conflict" description="In Ref. 2; BAA96463." evidence="7" ref="2">
    <original>K</original>
    <variation>R</variation>
    <location>
        <position position="306"/>
    </location>
</feature>
<organism>
    <name type="scientific">Mus musculus</name>
    <name type="common">Mouse</name>
    <dbReference type="NCBI Taxonomy" id="10090"/>
    <lineage>
        <taxon>Eukaryota</taxon>
        <taxon>Metazoa</taxon>
        <taxon>Chordata</taxon>
        <taxon>Craniata</taxon>
        <taxon>Vertebrata</taxon>
        <taxon>Euteleostomi</taxon>
        <taxon>Mammalia</taxon>
        <taxon>Eutheria</taxon>
        <taxon>Euarchontoglires</taxon>
        <taxon>Glires</taxon>
        <taxon>Rodentia</taxon>
        <taxon>Myomorpha</taxon>
        <taxon>Muroidea</taxon>
        <taxon>Muridae</taxon>
        <taxon>Murinae</taxon>
        <taxon>Mus</taxon>
        <taxon>Mus</taxon>
    </lineage>
</organism>
<comment type="function">
    <text evidence="1">Receptor for the cytotoxic ligand TNFSF10/TRAIL. The adapter molecule FADD recruits caspase-8 to the activated receptor. The resulting death-inducing signaling complex (DISC) performs caspase-8 proteolytic activation which initiates the subsequent cascade of caspases (aspartate-specific cysteine proteases) mediating apoptosis. Promotes the activation of NF-kappa-B. Essential for ER stress-induced apoptosis.</text>
</comment>
<comment type="subunit">
    <text evidence="1">Monomer. Can interact with TRADD and RIPK1. Three TNFRSF10B molecules interact with the TNFSF10 homotrimer. In the absence of stimulation, interacts with BIRC2, DDX3X and GSK3B. The interaction with BIRC2 and DDX3X is further enhanced upon receptor stimulation and accompanied by DDX3X and BIRC2 cleavage (By similarity).</text>
</comment>
<comment type="subcellular location">
    <subcellularLocation>
        <location>Membrane</location>
        <topology>Single-pass type I membrane protein</topology>
    </subcellularLocation>
</comment>
<comment type="tissue specificity">
    <text>Highly expressed in heart, lung and kidney.</text>
</comment>
<comment type="induction">
    <text>TNFRSF10B is regulated by the tumor suppressor p53.</text>
</comment>
<comment type="PTM">
    <text evidence="6">(Microbial infection) Glycosylated at Arg-293 by S.typhimurium protein Ssek3.</text>
</comment>
<accession>Q9QZM4</accession>
<accession>Q6GSD9</accession>
<accession>Q9JJL5</accession>
<accession>Q9JJL6</accession>
<protein>
    <recommendedName>
        <fullName>Tumor necrosis factor receptor superfamily member 10B</fullName>
    </recommendedName>
    <alternativeName>
        <fullName>Death receptor 5</fullName>
    </alternativeName>
    <alternativeName>
        <fullName>MK</fullName>
    </alternativeName>
    <cdAntigenName>CD262</cdAntigenName>
</protein>